<comment type="function">
    <text evidence="4">ATP-dependent DNA helicase involved in DNA repair at least for UV-induced lesions. Also aids the recombinational repair of camptothecin-induced collapsed replication forks.</text>
</comment>
<comment type="catalytic activity">
    <reaction>
        <text>Couples ATP hydrolysis with the unwinding of duplex DNA by translocating in the 3'-5' direction.</text>
        <dbReference type="EC" id="5.6.2.4"/>
    </reaction>
</comment>
<comment type="catalytic activity">
    <reaction>
        <text>ATP + H2O = ADP + phosphate + H(+)</text>
        <dbReference type="Rhea" id="RHEA:13065"/>
        <dbReference type="ChEBI" id="CHEBI:15377"/>
        <dbReference type="ChEBI" id="CHEBI:15378"/>
        <dbReference type="ChEBI" id="CHEBI:30616"/>
        <dbReference type="ChEBI" id="CHEBI:43474"/>
        <dbReference type="ChEBI" id="CHEBI:456216"/>
        <dbReference type="EC" id="5.6.2.4"/>
    </reaction>
</comment>
<comment type="interaction">
    <interactant intactId="EBI-8527058">
        <id>Q10213</id>
    </interactant>
    <interactant intactId="EBI-8527040">
        <id>O13600</id>
        <label>sws1</label>
    </interactant>
    <organismsDiffer>false</organismsDiffer>
    <experiments>2</experiments>
</comment>
<comment type="subcellular location">
    <subcellularLocation>
        <location evidence="1">Nucleus</location>
    </subcellularLocation>
</comment>
<comment type="similarity">
    <text evidence="5">Belongs to the helicase family. UvrD subfamily.</text>
</comment>
<accession>Q10213</accession>
<feature type="chain" id="PRO_0000102083" description="ATP-dependent DNA helicase srs2">
    <location>
        <begin position="1"/>
        <end position="887"/>
    </location>
</feature>
<feature type="domain" description="UvrD-like helicase ATP-binding" evidence="2">
    <location>
        <begin position="9"/>
        <end position="304"/>
    </location>
</feature>
<feature type="domain" description="UvrD-like helicase C-terminal" evidence="3">
    <location>
        <begin position="305"/>
        <end position="597"/>
    </location>
</feature>
<feature type="binding site" evidence="2">
    <location>
        <begin position="33"/>
        <end position="38"/>
    </location>
    <ligand>
        <name>ATP</name>
        <dbReference type="ChEBI" id="CHEBI:30616"/>
    </ligand>
</feature>
<feature type="binding site" evidence="1">
    <location>
        <position position="302"/>
    </location>
    <ligand>
        <name>ATP</name>
        <dbReference type="ChEBI" id="CHEBI:30616"/>
    </ligand>
</feature>
<evidence type="ECO:0000250" key="1"/>
<evidence type="ECO:0000255" key="2">
    <source>
        <dbReference type="PROSITE-ProRule" id="PRU00560"/>
    </source>
</evidence>
<evidence type="ECO:0000255" key="3">
    <source>
        <dbReference type="PROSITE-ProRule" id="PRU00617"/>
    </source>
</evidence>
<evidence type="ECO:0000269" key="4">
    <source>
    </source>
</evidence>
<evidence type="ECO:0000305" key="5"/>
<keyword id="KW-0067">ATP-binding</keyword>
<keyword id="KW-0227">DNA damage</keyword>
<keyword id="KW-0234">DNA repair</keyword>
<keyword id="KW-0238">DNA-binding</keyword>
<keyword id="KW-0347">Helicase</keyword>
<keyword id="KW-0378">Hydrolase</keyword>
<keyword id="KW-0413">Isomerase</keyword>
<keyword id="KW-0547">Nucleotide-binding</keyword>
<keyword id="KW-0539">Nucleus</keyword>
<keyword id="KW-1185">Reference proteome</keyword>
<name>SRS2_SCHPO</name>
<organism>
    <name type="scientific">Schizosaccharomyces pombe (strain 972 / ATCC 24843)</name>
    <name type="common">Fission yeast</name>
    <dbReference type="NCBI Taxonomy" id="284812"/>
    <lineage>
        <taxon>Eukaryota</taxon>
        <taxon>Fungi</taxon>
        <taxon>Dikarya</taxon>
        <taxon>Ascomycota</taxon>
        <taxon>Taphrinomycotina</taxon>
        <taxon>Schizosaccharomycetes</taxon>
        <taxon>Schizosaccharomycetales</taxon>
        <taxon>Schizosaccharomycetaceae</taxon>
        <taxon>Schizosaccharomyces</taxon>
    </lineage>
</organism>
<sequence>METKSSYLKFLNEEQRISVQSPHKYTQILAGPGSGKTRVLTARVAYLLQKNHIAAEDLIIATFTNKAANEIKLRIEAILGNSEASKLISGTFHSIAYKYLVKYGKHIGLSSNWLIADRNDTQAIMKRLLDSLKKAKNPIASGIRGQELTPQNALNRITKLKSNGLLVKPGMDQLSLINGLEEPPKELQSHQSVELYRLYQTSLWKNNLADFDDLLLNFILLLQKQPDCVRNIKHILIDEFQDTSKIQYFLVKLLALQNSDITIVGDPDQSIYGFRSAEIRNLNQMSEDFEGTQVLHLERNYRSAKPILELALSIISQDKSRPKKGLKSNHISSLKPHYRLFETNNKESYWIAREIKRIVGSCPELIFYNDIAILVRSSSLTRSLEHALSELGVPYRMVGVNKFFDREEIRDLIAYLRVLANKDSTSLIRVINVPPRNIGKTKIDRIIFESERRGLTFWQTLNEVKNENILLSQRNDKSFLKSLKSFLCSISKLENRYLSNGHSATLSDLLLGILSEIKYYEYLVRKNKETVEEKWENVMELVQQSDNISCIFYELDYKISTIVLLQNFLTQIALVNEEQKEGESQKVTISTLHAAKGLEWPVVFLPCLCENIIPHSRSDDLDEERRLLYVGATRAQALLYLSSFKSVTGMFADMQNSDNVQDVSPFLKGEEMKRWVMESEIVFNEKIASEIGTILGRKSYGKITNLSGIGSNANHNGTKFENLGFQCCRVLAEAELKKRERVKSVNDYNKDETNFRKHNAKRSKTDIRSWFEKKQPIDSDVEISEPSRSASIMVANKDLNDRSFETVNRIVSTRASTTNASFMSSVRQNLGRGPSTKDQVINRTLREGHQDVVQHTDLNQSNTKVASARPAGSRKRLGVRLRVSRML</sequence>
<dbReference type="EC" id="5.6.2.4"/>
<dbReference type="EMBL" id="CU329670">
    <property type="protein sequence ID" value="CAA93344.1"/>
    <property type="molecule type" value="Genomic_DNA"/>
</dbReference>
<dbReference type="PIR" id="T38885">
    <property type="entry name" value="T38885"/>
</dbReference>
<dbReference type="RefSeq" id="NP_594341.1">
    <property type="nucleotide sequence ID" value="NM_001019762.2"/>
</dbReference>
<dbReference type="SMR" id="Q10213"/>
<dbReference type="BioGRID" id="279992">
    <property type="interactions" value="70"/>
</dbReference>
<dbReference type="FunCoup" id="Q10213">
    <property type="interactions" value="396"/>
</dbReference>
<dbReference type="IntAct" id="Q10213">
    <property type="interactions" value="1"/>
</dbReference>
<dbReference type="MINT" id="Q10213"/>
<dbReference type="STRING" id="284812.Q10213"/>
<dbReference type="iPTMnet" id="Q10213"/>
<dbReference type="PaxDb" id="4896-SPAC4H3.05.1"/>
<dbReference type="EnsemblFungi" id="SPAC4H3.05.1">
    <property type="protein sequence ID" value="SPAC4H3.05.1:pep"/>
    <property type="gene ID" value="SPAC4H3.05"/>
</dbReference>
<dbReference type="GeneID" id="2543577"/>
<dbReference type="KEGG" id="spo:2543577"/>
<dbReference type="PomBase" id="SPAC4H3.05">
    <property type="gene designation" value="srs2"/>
</dbReference>
<dbReference type="VEuPathDB" id="FungiDB:SPAC4H3.05"/>
<dbReference type="eggNOG" id="KOG2108">
    <property type="taxonomic scope" value="Eukaryota"/>
</dbReference>
<dbReference type="HOGENOM" id="CLU_004585_4_2_1"/>
<dbReference type="InParanoid" id="Q10213"/>
<dbReference type="OMA" id="DYPDATT"/>
<dbReference type="PhylomeDB" id="Q10213"/>
<dbReference type="PRO" id="PR:Q10213"/>
<dbReference type="Proteomes" id="UP000002485">
    <property type="component" value="Chromosome I"/>
</dbReference>
<dbReference type="GO" id="GO:0005634">
    <property type="term" value="C:nucleus"/>
    <property type="evidence" value="ECO:0007005"/>
    <property type="project" value="PomBase"/>
</dbReference>
<dbReference type="GO" id="GO:0043138">
    <property type="term" value="F:3'-5' DNA helicase activity"/>
    <property type="evidence" value="ECO:0000318"/>
    <property type="project" value="GO_Central"/>
</dbReference>
<dbReference type="GO" id="GO:0005524">
    <property type="term" value="F:ATP binding"/>
    <property type="evidence" value="ECO:0007669"/>
    <property type="project" value="UniProtKB-KW"/>
</dbReference>
<dbReference type="GO" id="GO:0016887">
    <property type="term" value="F:ATP hydrolysis activity"/>
    <property type="evidence" value="ECO:0007669"/>
    <property type="project" value="RHEA"/>
</dbReference>
<dbReference type="GO" id="GO:0003677">
    <property type="term" value="F:DNA binding"/>
    <property type="evidence" value="ECO:0007669"/>
    <property type="project" value="UniProtKB-KW"/>
</dbReference>
<dbReference type="GO" id="GO:1990426">
    <property type="term" value="P:mitotic recombination-dependent replication fork processing"/>
    <property type="evidence" value="ECO:0000315"/>
    <property type="project" value="PomBase"/>
</dbReference>
<dbReference type="GO" id="GO:0006301">
    <property type="term" value="P:postreplication repair"/>
    <property type="evidence" value="ECO:0000316"/>
    <property type="project" value="PomBase"/>
</dbReference>
<dbReference type="GO" id="GO:0000725">
    <property type="term" value="P:recombinational repair"/>
    <property type="evidence" value="ECO:0000315"/>
    <property type="project" value="PomBase"/>
</dbReference>
<dbReference type="CDD" id="cd17932">
    <property type="entry name" value="DEXQc_UvrD"/>
    <property type="match status" value="1"/>
</dbReference>
<dbReference type="CDD" id="cd18807">
    <property type="entry name" value="SF1_C_UvrD"/>
    <property type="match status" value="1"/>
</dbReference>
<dbReference type="Gene3D" id="1.10.10.160">
    <property type="match status" value="1"/>
</dbReference>
<dbReference type="Gene3D" id="3.40.50.300">
    <property type="entry name" value="P-loop containing nucleotide triphosphate hydrolases"/>
    <property type="match status" value="2"/>
</dbReference>
<dbReference type="Gene3D" id="1.10.486.10">
    <property type="entry name" value="PCRA, domain 4"/>
    <property type="match status" value="1"/>
</dbReference>
<dbReference type="InterPro" id="IPR013986">
    <property type="entry name" value="DExx_box_DNA_helicase_dom_sf"/>
</dbReference>
<dbReference type="InterPro" id="IPR014017">
    <property type="entry name" value="DNA_helicase_UvrD-like_C"/>
</dbReference>
<dbReference type="InterPro" id="IPR000212">
    <property type="entry name" value="DNA_helicase_UvrD/REP"/>
</dbReference>
<dbReference type="InterPro" id="IPR027417">
    <property type="entry name" value="P-loop_NTPase"/>
</dbReference>
<dbReference type="InterPro" id="IPR014016">
    <property type="entry name" value="UvrD-like_ATP-bd"/>
</dbReference>
<dbReference type="PANTHER" id="PTHR11070:SF2">
    <property type="entry name" value="ATP-DEPENDENT DNA HELICASE SRS2"/>
    <property type="match status" value="1"/>
</dbReference>
<dbReference type="PANTHER" id="PTHR11070">
    <property type="entry name" value="UVRD / RECB / PCRA DNA HELICASE FAMILY MEMBER"/>
    <property type="match status" value="1"/>
</dbReference>
<dbReference type="Pfam" id="PF00580">
    <property type="entry name" value="UvrD-helicase"/>
    <property type="match status" value="1"/>
</dbReference>
<dbReference type="Pfam" id="PF13361">
    <property type="entry name" value="UvrD_C"/>
    <property type="match status" value="1"/>
</dbReference>
<dbReference type="SUPFAM" id="SSF52540">
    <property type="entry name" value="P-loop containing nucleoside triphosphate hydrolases"/>
    <property type="match status" value="1"/>
</dbReference>
<dbReference type="PROSITE" id="PS51198">
    <property type="entry name" value="UVRD_HELICASE_ATP_BIND"/>
    <property type="match status" value="1"/>
</dbReference>
<dbReference type="PROSITE" id="PS51217">
    <property type="entry name" value="UVRD_HELICASE_CTER"/>
    <property type="match status" value="1"/>
</dbReference>
<reference key="1">
    <citation type="journal article" date="2002" name="Nature">
        <title>The genome sequence of Schizosaccharomyces pombe.</title>
        <authorList>
            <person name="Wood V."/>
            <person name="Gwilliam R."/>
            <person name="Rajandream M.A."/>
            <person name="Lyne M.H."/>
            <person name="Lyne R."/>
            <person name="Stewart A."/>
            <person name="Sgouros J.G."/>
            <person name="Peat N."/>
            <person name="Hayles J."/>
            <person name="Baker S.G."/>
            <person name="Basham D."/>
            <person name="Bowman S."/>
            <person name="Brooks K."/>
            <person name="Brown D."/>
            <person name="Brown S."/>
            <person name="Chillingworth T."/>
            <person name="Churcher C.M."/>
            <person name="Collins M."/>
            <person name="Connor R."/>
            <person name="Cronin A."/>
            <person name="Davis P."/>
            <person name="Feltwell T."/>
            <person name="Fraser A."/>
            <person name="Gentles S."/>
            <person name="Goble A."/>
            <person name="Hamlin N."/>
            <person name="Harris D.E."/>
            <person name="Hidalgo J."/>
            <person name="Hodgson G."/>
            <person name="Holroyd S."/>
            <person name="Hornsby T."/>
            <person name="Howarth S."/>
            <person name="Huckle E.J."/>
            <person name="Hunt S."/>
            <person name="Jagels K."/>
            <person name="James K.D."/>
            <person name="Jones L."/>
            <person name="Jones M."/>
            <person name="Leather S."/>
            <person name="McDonald S."/>
            <person name="McLean J."/>
            <person name="Mooney P."/>
            <person name="Moule S."/>
            <person name="Mungall K.L."/>
            <person name="Murphy L.D."/>
            <person name="Niblett D."/>
            <person name="Odell C."/>
            <person name="Oliver K."/>
            <person name="O'Neil S."/>
            <person name="Pearson D."/>
            <person name="Quail M.A."/>
            <person name="Rabbinowitsch E."/>
            <person name="Rutherford K.M."/>
            <person name="Rutter S."/>
            <person name="Saunders D."/>
            <person name="Seeger K."/>
            <person name="Sharp S."/>
            <person name="Skelton J."/>
            <person name="Simmonds M.N."/>
            <person name="Squares R."/>
            <person name="Squares S."/>
            <person name="Stevens K."/>
            <person name="Taylor K."/>
            <person name="Taylor R.G."/>
            <person name="Tivey A."/>
            <person name="Walsh S.V."/>
            <person name="Warren T."/>
            <person name="Whitehead S."/>
            <person name="Woodward J.R."/>
            <person name="Volckaert G."/>
            <person name="Aert R."/>
            <person name="Robben J."/>
            <person name="Grymonprez B."/>
            <person name="Weltjens I."/>
            <person name="Vanstreels E."/>
            <person name="Rieger M."/>
            <person name="Schaefer M."/>
            <person name="Mueller-Auer S."/>
            <person name="Gabel C."/>
            <person name="Fuchs M."/>
            <person name="Duesterhoeft A."/>
            <person name="Fritzc C."/>
            <person name="Holzer E."/>
            <person name="Moestl D."/>
            <person name="Hilbert H."/>
            <person name="Borzym K."/>
            <person name="Langer I."/>
            <person name="Beck A."/>
            <person name="Lehrach H."/>
            <person name="Reinhardt R."/>
            <person name="Pohl T.M."/>
            <person name="Eger P."/>
            <person name="Zimmermann W."/>
            <person name="Wedler H."/>
            <person name="Wambutt R."/>
            <person name="Purnelle B."/>
            <person name="Goffeau A."/>
            <person name="Cadieu E."/>
            <person name="Dreano S."/>
            <person name="Gloux S."/>
            <person name="Lelaure V."/>
            <person name="Mottier S."/>
            <person name="Galibert F."/>
            <person name="Aves S.J."/>
            <person name="Xiang Z."/>
            <person name="Hunt C."/>
            <person name="Moore K."/>
            <person name="Hurst S.M."/>
            <person name="Lucas M."/>
            <person name="Rochet M."/>
            <person name="Gaillardin C."/>
            <person name="Tallada V.A."/>
            <person name="Garzon A."/>
            <person name="Thode G."/>
            <person name="Daga R.R."/>
            <person name="Cruzado L."/>
            <person name="Jimenez J."/>
            <person name="Sanchez M."/>
            <person name="del Rey F."/>
            <person name="Benito J."/>
            <person name="Dominguez A."/>
            <person name="Revuelta J.L."/>
            <person name="Moreno S."/>
            <person name="Armstrong J."/>
            <person name="Forsburg S.L."/>
            <person name="Cerutti L."/>
            <person name="Lowe T."/>
            <person name="McCombie W.R."/>
            <person name="Paulsen I."/>
            <person name="Potashkin J."/>
            <person name="Shpakovski G.V."/>
            <person name="Ussery D."/>
            <person name="Barrell B.G."/>
            <person name="Nurse P."/>
        </authorList>
    </citation>
    <scope>NUCLEOTIDE SEQUENCE [LARGE SCALE GENOMIC DNA]</scope>
    <source>
        <strain>972 / ATCC 24843</strain>
    </source>
</reference>
<reference key="2">
    <citation type="journal article" date="2004" name="Nucleic Acids Res.">
        <title>The involvement of Srs2 in post-replication repair and homologous recombination in fission yeast.</title>
        <authorList>
            <person name="Doe C.L."/>
            <person name="Whitby M.C."/>
        </authorList>
    </citation>
    <scope>FUNCTION</scope>
</reference>
<protein>
    <recommendedName>
        <fullName>ATP-dependent DNA helicase srs2</fullName>
        <ecNumber>5.6.2.4</ecNumber>
    </recommendedName>
    <alternativeName>
        <fullName evidence="5">DNA 3'-5' helicase srs2</fullName>
    </alternativeName>
</protein>
<proteinExistence type="evidence at protein level"/>
<gene>
    <name type="primary">srs2</name>
    <name type="ORF">SPAC4H3.05</name>
</gene>